<gene>
    <name evidence="1" type="primary">engB</name>
    <name type="ordered locus">SMU_950</name>
</gene>
<comment type="function">
    <text evidence="1">Necessary for normal cell division and for the maintenance of normal septation.</text>
</comment>
<comment type="cofactor">
    <cofactor evidence="1">
        <name>Mg(2+)</name>
        <dbReference type="ChEBI" id="CHEBI:18420"/>
    </cofactor>
</comment>
<comment type="similarity">
    <text evidence="1">Belongs to the TRAFAC class TrmE-Era-EngA-EngB-Septin-like GTPase superfamily. EngB GTPase family.</text>
</comment>
<accession>Q8DUH9</accession>
<protein>
    <recommendedName>
        <fullName evidence="1">Probable GTP-binding protein EngB</fullName>
    </recommendedName>
</protein>
<feature type="chain" id="PRO_0000266963" description="Probable GTP-binding protein EngB">
    <location>
        <begin position="1"/>
        <end position="197"/>
    </location>
</feature>
<feature type="domain" description="EngB-type G" evidence="1">
    <location>
        <begin position="26"/>
        <end position="197"/>
    </location>
</feature>
<feature type="binding site" evidence="1">
    <location>
        <begin position="34"/>
        <end position="41"/>
    </location>
    <ligand>
        <name>GTP</name>
        <dbReference type="ChEBI" id="CHEBI:37565"/>
    </ligand>
</feature>
<feature type="binding site" evidence="1">
    <location>
        <position position="41"/>
    </location>
    <ligand>
        <name>Mg(2+)</name>
        <dbReference type="ChEBI" id="CHEBI:18420"/>
    </ligand>
</feature>
<feature type="binding site" evidence="1">
    <location>
        <begin position="61"/>
        <end position="65"/>
    </location>
    <ligand>
        <name>GTP</name>
        <dbReference type="ChEBI" id="CHEBI:37565"/>
    </ligand>
</feature>
<feature type="binding site" evidence="1">
    <location>
        <position position="63"/>
    </location>
    <ligand>
        <name>Mg(2+)</name>
        <dbReference type="ChEBI" id="CHEBI:18420"/>
    </ligand>
</feature>
<feature type="binding site" evidence="1">
    <location>
        <begin position="79"/>
        <end position="82"/>
    </location>
    <ligand>
        <name>GTP</name>
        <dbReference type="ChEBI" id="CHEBI:37565"/>
    </ligand>
</feature>
<feature type="binding site" evidence="1">
    <location>
        <begin position="146"/>
        <end position="149"/>
    </location>
    <ligand>
        <name>GTP</name>
        <dbReference type="ChEBI" id="CHEBI:37565"/>
    </ligand>
</feature>
<feature type="binding site" evidence="1">
    <location>
        <begin position="178"/>
        <end position="180"/>
    </location>
    <ligand>
        <name>GTP</name>
        <dbReference type="ChEBI" id="CHEBI:37565"/>
    </ligand>
</feature>
<dbReference type="EMBL" id="AE014133">
    <property type="protein sequence ID" value="AAN58654.1"/>
    <property type="molecule type" value="Genomic_DNA"/>
</dbReference>
<dbReference type="RefSeq" id="NP_721348.1">
    <property type="nucleotide sequence ID" value="NC_004350.2"/>
</dbReference>
<dbReference type="SMR" id="Q8DUH9"/>
<dbReference type="STRING" id="210007.SMU_950"/>
<dbReference type="KEGG" id="smu:SMU_950"/>
<dbReference type="PATRIC" id="fig|210007.7.peg.847"/>
<dbReference type="eggNOG" id="COG0218">
    <property type="taxonomic scope" value="Bacteria"/>
</dbReference>
<dbReference type="HOGENOM" id="CLU_033732_3_0_9"/>
<dbReference type="OrthoDB" id="9804921at2"/>
<dbReference type="PhylomeDB" id="Q8DUH9"/>
<dbReference type="Proteomes" id="UP000002512">
    <property type="component" value="Chromosome"/>
</dbReference>
<dbReference type="GO" id="GO:0005829">
    <property type="term" value="C:cytosol"/>
    <property type="evidence" value="ECO:0007669"/>
    <property type="project" value="TreeGrafter"/>
</dbReference>
<dbReference type="GO" id="GO:0005525">
    <property type="term" value="F:GTP binding"/>
    <property type="evidence" value="ECO:0007669"/>
    <property type="project" value="UniProtKB-UniRule"/>
</dbReference>
<dbReference type="GO" id="GO:0046872">
    <property type="term" value="F:metal ion binding"/>
    <property type="evidence" value="ECO:0007669"/>
    <property type="project" value="UniProtKB-KW"/>
</dbReference>
<dbReference type="GO" id="GO:0000917">
    <property type="term" value="P:division septum assembly"/>
    <property type="evidence" value="ECO:0007669"/>
    <property type="project" value="UniProtKB-KW"/>
</dbReference>
<dbReference type="CDD" id="cd01876">
    <property type="entry name" value="YihA_EngB"/>
    <property type="match status" value="1"/>
</dbReference>
<dbReference type="FunFam" id="3.40.50.300:FF:000098">
    <property type="entry name" value="Probable GTP-binding protein EngB"/>
    <property type="match status" value="1"/>
</dbReference>
<dbReference type="Gene3D" id="3.40.50.300">
    <property type="entry name" value="P-loop containing nucleotide triphosphate hydrolases"/>
    <property type="match status" value="1"/>
</dbReference>
<dbReference type="HAMAP" id="MF_00321">
    <property type="entry name" value="GTPase_EngB"/>
    <property type="match status" value="1"/>
</dbReference>
<dbReference type="InterPro" id="IPR030393">
    <property type="entry name" value="G_ENGB_dom"/>
</dbReference>
<dbReference type="InterPro" id="IPR006073">
    <property type="entry name" value="GTP-bd"/>
</dbReference>
<dbReference type="InterPro" id="IPR019987">
    <property type="entry name" value="GTP-bd_ribosome_bio_YsxC"/>
</dbReference>
<dbReference type="InterPro" id="IPR027417">
    <property type="entry name" value="P-loop_NTPase"/>
</dbReference>
<dbReference type="InterPro" id="IPR005225">
    <property type="entry name" value="Small_GTP-bd"/>
</dbReference>
<dbReference type="NCBIfam" id="TIGR03598">
    <property type="entry name" value="GTPase_YsxC"/>
    <property type="match status" value="1"/>
</dbReference>
<dbReference type="NCBIfam" id="TIGR00231">
    <property type="entry name" value="small_GTP"/>
    <property type="match status" value="1"/>
</dbReference>
<dbReference type="PANTHER" id="PTHR11649:SF13">
    <property type="entry name" value="ENGB-TYPE G DOMAIN-CONTAINING PROTEIN"/>
    <property type="match status" value="1"/>
</dbReference>
<dbReference type="PANTHER" id="PTHR11649">
    <property type="entry name" value="MSS1/TRME-RELATED GTP-BINDING PROTEIN"/>
    <property type="match status" value="1"/>
</dbReference>
<dbReference type="Pfam" id="PF01926">
    <property type="entry name" value="MMR_HSR1"/>
    <property type="match status" value="1"/>
</dbReference>
<dbReference type="SUPFAM" id="SSF52540">
    <property type="entry name" value="P-loop containing nucleoside triphosphate hydrolases"/>
    <property type="match status" value="1"/>
</dbReference>
<dbReference type="PROSITE" id="PS51706">
    <property type="entry name" value="G_ENGB"/>
    <property type="match status" value="1"/>
</dbReference>
<reference key="1">
    <citation type="journal article" date="2002" name="Proc. Natl. Acad. Sci. U.S.A.">
        <title>Genome sequence of Streptococcus mutans UA159, a cariogenic dental pathogen.</title>
        <authorList>
            <person name="Ajdic D.J."/>
            <person name="McShan W.M."/>
            <person name="McLaughlin R.E."/>
            <person name="Savic G."/>
            <person name="Chang J."/>
            <person name="Carson M.B."/>
            <person name="Primeaux C."/>
            <person name="Tian R."/>
            <person name="Kenton S."/>
            <person name="Jia H.G."/>
            <person name="Lin S.P."/>
            <person name="Qian Y."/>
            <person name="Li S."/>
            <person name="Zhu H."/>
            <person name="Najar F.Z."/>
            <person name="Lai H."/>
            <person name="White J."/>
            <person name="Roe B.A."/>
            <person name="Ferretti J.J."/>
        </authorList>
    </citation>
    <scope>NUCLEOTIDE SEQUENCE [LARGE SCALE GENOMIC DNA]</scope>
    <source>
        <strain>ATCC 700610 / UA159</strain>
    </source>
</reference>
<evidence type="ECO:0000255" key="1">
    <source>
        <dbReference type="HAMAP-Rule" id="MF_00321"/>
    </source>
</evidence>
<sequence length="197" mass="22333">MSEFLNTHNASILLSAVNKSHYPQDDLPEIALAGRSNVGKSSFINTLLGRKNLARTSSKPGKTQSLNFYNIDDKLRFVDVPGYGYAKVSKKERAKWGKMIEEYLTSRENLRAVVSLVDFRHDPSSDDVQMYDFLKYYEIPVILVATKADKVPRGKWNKQESAIKKKLDFDSNDAFIIFSSVDRTGLDTSWDAILESL</sequence>
<name>ENGB_STRMU</name>
<keyword id="KW-0131">Cell cycle</keyword>
<keyword id="KW-0132">Cell division</keyword>
<keyword id="KW-0342">GTP-binding</keyword>
<keyword id="KW-0460">Magnesium</keyword>
<keyword id="KW-0479">Metal-binding</keyword>
<keyword id="KW-0547">Nucleotide-binding</keyword>
<keyword id="KW-1185">Reference proteome</keyword>
<keyword id="KW-0717">Septation</keyword>
<organism>
    <name type="scientific">Streptococcus mutans serotype c (strain ATCC 700610 / UA159)</name>
    <dbReference type="NCBI Taxonomy" id="210007"/>
    <lineage>
        <taxon>Bacteria</taxon>
        <taxon>Bacillati</taxon>
        <taxon>Bacillota</taxon>
        <taxon>Bacilli</taxon>
        <taxon>Lactobacillales</taxon>
        <taxon>Streptococcaceae</taxon>
        <taxon>Streptococcus</taxon>
    </lineage>
</organism>
<proteinExistence type="inferred from homology"/>